<evidence type="ECO:0000250" key="1"/>
<evidence type="ECO:0000250" key="2">
    <source>
        <dbReference type="UniProtKB" id="Q969M7"/>
    </source>
</evidence>
<evidence type="ECO:0000255" key="3">
    <source>
        <dbReference type="PROSITE-ProRule" id="PRU00388"/>
    </source>
</evidence>
<evidence type="ECO:0000255" key="4">
    <source>
        <dbReference type="PROSITE-ProRule" id="PRU10133"/>
    </source>
</evidence>
<evidence type="ECO:0000256" key="5">
    <source>
        <dbReference type="SAM" id="MobiDB-lite"/>
    </source>
</evidence>
<protein>
    <recommendedName>
        <fullName>NEDD8-conjugating enzyme UBE2F</fullName>
        <ecNumber evidence="2">2.3.2.34</ecNumber>
    </recommendedName>
    <alternativeName>
        <fullName>NEDD8 carrier protein UBE2F</fullName>
    </alternativeName>
    <alternativeName>
        <fullName>NEDD8 protein ligase UBE2F</fullName>
    </alternativeName>
    <alternativeName>
        <fullName>NEDD8-conjugating enzyme 2</fullName>
    </alternativeName>
    <alternativeName>
        <fullName>RING-type E3 NEDD8 transferase UBE2F</fullName>
    </alternativeName>
    <alternativeName>
        <fullName>Ubiquitin-conjugating enzyme E2 F</fullName>
    </alternativeName>
</protein>
<gene>
    <name type="primary">UBE2F</name>
    <name type="ORF">RCJMB04_8m10</name>
</gene>
<feature type="chain" id="PRO_0000263079" description="NEDD8-conjugating enzyme UBE2F">
    <location>
        <begin position="1"/>
        <end position="185"/>
    </location>
</feature>
<feature type="domain" description="UBC core" evidence="3">
    <location>
        <begin position="32"/>
        <end position="185"/>
    </location>
</feature>
<feature type="region of interest" description="Interaction with UBA3" evidence="1">
    <location>
        <begin position="1"/>
        <end position="29"/>
    </location>
</feature>
<feature type="region of interest" description="Disordered" evidence="5">
    <location>
        <begin position="11"/>
        <end position="30"/>
    </location>
</feature>
<feature type="active site" description="Glycyl thioester intermediate" evidence="3 4">
    <location>
        <position position="116"/>
    </location>
</feature>
<reference key="1">
    <citation type="journal article" date="2005" name="Genome Biol.">
        <title>Full-length cDNAs from chicken bursal lymphocytes to facilitate gene function analysis.</title>
        <authorList>
            <person name="Caldwell R.B."/>
            <person name="Kierzek A.M."/>
            <person name="Arakawa H."/>
            <person name="Bezzubov Y."/>
            <person name="Zaim J."/>
            <person name="Fiedler P."/>
            <person name="Kutter S."/>
            <person name="Blagodatski A."/>
            <person name="Kostovska D."/>
            <person name="Koter M."/>
            <person name="Plachy J."/>
            <person name="Carninci P."/>
            <person name="Hayashizaki Y."/>
            <person name="Buerstedde J.-M."/>
        </authorList>
    </citation>
    <scope>NUCLEOTIDE SEQUENCE [LARGE SCALE MRNA]</scope>
    <source>
        <strain>CB</strain>
        <tissue>Bursa of Fabricius</tissue>
    </source>
</reference>
<proteinExistence type="evidence at transcript level"/>
<accession>Q5ZKX6</accession>
<sequence length="185" mass="21229">MLTLASKLKRDDGVRGPRASNPASDSTRRVSVRDKLLVKEVAELEANLPCTCKVNFPDPNKLHYFQLTVIPDEGYYQGGKFQFEIEVPDAYNMVPPKVKCLTRIWHPNITETGEICLSLLREHSIDGTGWAPTRTLKDVVWGLNSLFTDLLNFDDPLNIEAAEHHLRDKEDFRNKVEDYIKRYAR</sequence>
<dbReference type="EC" id="2.3.2.34" evidence="2"/>
<dbReference type="EMBL" id="AJ719958">
    <property type="protein sequence ID" value="CAG31617.1"/>
    <property type="molecule type" value="mRNA"/>
</dbReference>
<dbReference type="RefSeq" id="NP_001006512.1">
    <property type="nucleotide sequence ID" value="NM_001006512.2"/>
</dbReference>
<dbReference type="RefSeq" id="XP_046777205.1">
    <property type="nucleotide sequence ID" value="XM_046921249.1"/>
</dbReference>
<dbReference type="SMR" id="Q5ZKX6"/>
<dbReference type="FunCoup" id="Q5ZKX6">
    <property type="interactions" value="1509"/>
</dbReference>
<dbReference type="STRING" id="9031.ENSGALP00000064619"/>
<dbReference type="Ensembl" id="ENSGALT00010029020.1">
    <property type="protein sequence ID" value="ENSGALP00010016779.1"/>
    <property type="gene ID" value="ENSGALG00010012100.1"/>
</dbReference>
<dbReference type="GeneID" id="424015"/>
<dbReference type="KEGG" id="gga:424015"/>
<dbReference type="CTD" id="140739"/>
<dbReference type="VEuPathDB" id="HostDB:geneid_424015"/>
<dbReference type="GeneTree" id="ENSGT00940000154349"/>
<dbReference type="InParanoid" id="Q5ZKX6"/>
<dbReference type="OrthoDB" id="10249039at2759"/>
<dbReference type="PhylomeDB" id="Q5ZKX6"/>
<dbReference type="Reactome" id="R-GGA-8951664">
    <property type="pathway name" value="Neddylation"/>
</dbReference>
<dbReference type="Reactome" id="R-GGA-983168">
    <property type="pathway name" value="Antigen processing: Ubiquitination &amp; Proteasome degradation"/>
</dbReference>
<dbReference type="UniPathway" id="UPA00885"/>
<dbReference type="PRO" id="PR:Q5ZKX6"/>
<dbReference type="Proteomes" id="UP000000539">
    <property type="component" value="Chromosome 7"/>
</dbReference>
<dbReference type="Bgee" id="ENSGALG00000003812">
    <property type="expression patterns" value="Expressed in muscle tissue and 14 other cell types or tissues"/>
</dbReference>
<dbReference type="GO" id="GO:0005829">
    <property type="term" value="C:cytosol"/>
    <property type="evidence" value="ECO:0000318"/>
    <property type="project" value="GO_Central"/>
</dbReference>
<dbReference type="GO" id="GO:0005634">
    <property type="term" value="C:nucleus"/>
    <property type="evidence" value="ECO:0000318"/>
    <property type="project" value="GO_Central"/>
</dbReference>
<dbReference type="GO" id="GO:0005524">
    <property type="term" value="F:ATP binding"/>
    <property type="evidence" value="ECO:0007669"/>
    <property type="project" value="UniProtKB-KW"/>
</dbReference>
<dbReference type="GO" id="GO:0061654">
    <property type="term" value="F:NEDD8 conjugating enzyme activity"/>
    <property type="evidence" value="ECO:0000250"/>
    <property type="project" value="UniProtKB"/>
</dbReference>
<dbReference type="GO" id="GO:0061663">
    <property type="term" value="F:NEDD8 ligase activity"/>
    <property type="evidence" value="ECO:0007669"/>
    <property type="project" value="UniProtKB-EC"/>
</dbReference>
<dbReference type="GO" id="GO:0019788">
    <property type="term" value="F:NEDD8 transferase activity"/>
    <property type="evidence" value="ECO:0000318"/>
    <property type="project" value="GO_Central"/>
</dbReference>
<dbReference type="GO" id="GO:0045116">
    <property type="term" value="P:protein neddylation"/>
    <property type="evidence" value="ECO:0000250"/>
    <property type="project" value="UniProtKB"/>
</dbReference>
<dbReference type="CDD" id="cd23794">
    <property type="entry name" value="UBCc_UBE2F_UBE2M"/>
    <property type="match status" value="1"/>
</dbReference>
<dbReference type="FunFam" id="3.10.110.10:FF:000033">
    <property type="entry name" value="NEDD8-conjugating enzyme UBE2F"/>
    <property type="match status" value="1"/>
</dbReference>
<dbReference type="Gene3D" id="3.10.110.10">
    <property type="entry name" value="Ubiquitin Conjugating Enzyme"/>
    <property type="match status" value="1"/>
</dbReference>
<dbReference type="InterPro" id="IPR000608">
    <property type="entry name" value="UBQ-conjugat_E2_core"/>
</dbReference>
<dbReference type="InterPro" id="IPR023313">
    <property type="entry name" value="UBQ-conjugating_AS"/>
</dbReference>
<dbReference type="InterPro" id="IPR016135">
    <property type="entry name" value="UBQ-conjugating_enzyme/RWD"/>
</dbReference>
<dbReference type="PANTHER" id="PTHR24068">
    <property type="entry name" value="UBIQUITIN-CONJUGATING ENZYME E2"/>
    <property type="match status" value="1"/>
</dbReference>
<dbReference type="Pfam" id="PF00179">
    <property type="entry name" value="UQ_con"/>
    <property type="match status" value="1"/>
</dbReference>
<dbReference type="SMART" id="SM00212">
    <property type="entry name" value="UBCc"/>
    <property type="match status" value="1"/>
</dbReference>
<dbReference type="SUPFAM" id="SSF54495">
    <property type="entry name" value="UBC-like"/>
    <property type="match status" value="1"/>
</dbReference>
<dbReference type="PROSITE" id="PS00183">
    <property type="entry name" value="UBC_1"/>
    <property type="match status" value="1"/>
</dbReference>
<dbReference type="PROSITE" id="PS50127">
    <property type="entry name" value="UBC_2"/>
    <property type="match status" value="1"/>
</dbReference>
<keyword id="KW-0067">ATP-binding</keyword>
<keyword id="KW-0547">Nucleotide-binding</keyword>
<keyword id="KW-1185">Reference proteome</keyword>
<keyword id="KW-0808">Transferase</keyword>
<keyword id="KW-0833">Ubl conjugation pathway</keyword>
<name>UBE2F_CHICK</name>
<comment type="function">
    <text evidence="2">Accepts the ubiquitin-like protein NEDD8 from the UBA3-NAE1 E1 complex and catalyzes its covalent attachment to other proteins. Together with the E3 ubiquitin ligase RNF7/RBX2, specifically neddylates cullin-5 (CUL5). Does not neddylate CUL1, CUL2, CUL3, CUL4A or CUL4B.</text>
</comment>
<comment type="catalytic activity">
    <reaction evidence="2">
        <text>[E1 NEDD8-activating enzyme]-S-[NEDD8 protein]-yl-L-cysteine + [E2 NEDD8-conjugating enzyme]-L-cysteine = [E1 NEDD8-activating enzyme]-L-cysteine + [E2 NEDD8-conjugating enzyme]-S-[NEDD8-protein]-yl-L-cysteine.</text>
        <dbReference type="EC" id="2.3.2.34"/>
    </reaction>
</comment>
<comment type="pathway">
    <text evidence="2">Protein modification; protein neddylation.</text>
</comment>
<comment type="similarity">
    <text evidence="3">Belongs to the ubiquitin-conjugating enzyme family. UBE2F subfamily.</text>
</comment>
<organism>
    <name type="scientific">Gallus gallus</name>
    <name type="common">Chicken</name>
    <dbReference type="NCBI Taxonomy" id="9031"/>
    <lineage>
        <taxon>Eukaryota</taxon>
        <taxon>Metazoa</taxon>
        <taxon>Chordata</taxon>
        <taxon>Craniata</taxon>
        <taxon>Vertebrata</taxon>
        <taxon>Euteleostomi</taxon>
        <taxon>Archelosauria</taxon>
        <taxon>Archosauria</taxon>
        <taxon>Dinosauria</taxon>
        <taxon>Saurischia</taxon>
        <taxon>Theropoda</taxon>
        <taxon>Coelurosauria</taxon>
        <taxon>Aves</taxon>
        <taxon>Neognathae</taxon>
        <taxon>Galloanserae</taxon>
        <taxon>Galliformes</taxon>
        <taxon>Phasianidae</taxon>
        <taxon>Phasianinae</taxon>
        <taxon>Gallus</taxon>
    </lineage>
</organism>